<organism>
    <name type="scientific">Thunnus thynnus</name>
    <name type="common">Atlantic bluefin tuna</name>
    <name type="synonym">Scomber thynnus</name>
    <dbReference type="NCBI Taxonomy" id="8237"/>
    <lineage>
        <taxon>Eukaryota</taxon>
        <taxon>Metazoa</taxon>
        <taxon>Chordata</taxon>
        <taxon>Craniata</taxon>
        <taxon>Vertebrata</taxon>
        <taxon>Euteleostomi</taxon>
        <taxon>Actinopterygii</taxon>
        <taxon>Neopterygii</taxon>
        <taxon>Teleostei</taxon>
        <taxon>Neoteleostei</taxon>
        <taxon>Acanthomorphata</taxon>
        <taxon>Pelagiaria</taxon>
        <taxon>Scombriformes</taxon>
        <taxon>Scombridae</taxon>
        <taxon>Thunnus</taxon>
    </lineage>
</organism>
<dbReference type="EC" id="1.4.1.2"/>
<dbReference type="PIR" id="A12729">
    <property type="entry name" value="A12729"/>
</dbReference>
<dbReference type="GO" id="GO:0004352">
    <property type="term" value="F:glutamate dehydrogenase (NAD+) activity"/>
    <property type="evidence" value="ECO:0007669"/>
    <property type="project" value="UniProtKB-EC"/>
</dbReference>
<proteinExistence type="evidence at protein level"/>
<feature type="chain" id="PRO_0000182734" description="NAD-specific glutamate dehydrogenase">
    <location>
        <begin position="1" status="less than"/>
        <end position="16" status="greater than"/>
    </location>
</feature>
<feature type="active site">
    <location>
        <position position="12"/>
    </location>
</feature>
<feature type="non-terminal residue">
    <location>
        <position position="1"/>
    </location>
</feature>
<feature type="non-terminal residue">
    <location>
        <position position="16"/>
    </location>
</feature>
<protein>
    <recommendedName>
        <fullName>NAD-specific glutamate dehydrogenase</fullName>
        <shortName>NAD-GDH</shortName>
        <ecNumber>1.4.1.2</ecNumber>
    </recommendedName>
</protein>
<name>DHE2_THUTH</name>
<sequence>CAVVDVPFGGAKAGVK</sequence>
<keyword id="KW-0903">Direct protein sequencing</keyword>
<keyword id="KW-0520">NAD</keyword>
<keyword id="KW-0560">Oxidoreductase</keyword>
<accession>P20016</accession>
<reference key="1">
    <citation type="journal article" date="1976" name="Biochim. Biophys. Acta">
        <title>Purification, characteristics and sequence of a peptide containing an essential lysine residue.</title>
        <authorList>
            <person name="Veronese F.M."/>
            <person name="Bevilacqua R."/>
            <person name="Boccu E."/>
            <person name="Brown D.M."/>
        </authorList>
    </citation>
    <scope>PROTEIN SEQUENCE</scope>
    <source>
        <tissue>Liver</tissue>
    </source>
</reference>
<comment type="catalytic activity">
    <reaction>
        <text>L-glutamate + NAD(+) + H2O = 2-oxoglutarate + NH4(+) + NADH + H(+)</text>
        <dbReference type="Rhea" id="RHEA:15133"/>
        <dbReference type="ChEBI" id="CHEBI:15377"/>
        <dbReference type="ChEBI" id="CHEBI:15378"/>
        <dbReference type="ChEBI" id="CHEBI:16810"/>
        <dbReference type="ChEBI" id="CHEBI:28938"/>
        <dbReference type="ChEBI" id="CHEBI:29985"/>
        <dbReference type="ChEBI" id="CHEBI:57540"/>
        <dbReference type="ChEBI" id="CHEBI:57945"/>
        <dbReference type="EC" id="1.4.1.2"/>
    </reaction>
</comment>
<comment type="similarity">
    <text evidence="1">Belongs to the Glu/Leu/Phe/Val dehydrogenases family.</text>
</comment>
<evidence type="ECO:0000305" key="1"/>